<protein>
    <recommendedName>
        <fullName evidence="9">Short form salivary protein D7R4</fullName>
    </recommendedName>
    <alternativeName>
        <fullName evidence="10">D7-related 4 protein</fullName>
    </alternativeName>
    <alternativeName>
        <fullName evidence="11">D7r4 protein</fullName>
    </alternativeName>
</protein>
<feature type="signal peptide" evidence="2">
    <location>
        <begin position="1"/>
        <end position="21"/>
    </location>
</feature>
<feature type="chain" id="PRO_5010147825" description="Short form salivary protein D7R4" evidence="2">
    <location>
        <begin position="22"/>
        <end position="165"/>
    </location>
</feature>
<feature type="binding site" evidence="7 17">
    <location>
        <position position="28"/>
    </location>
    <ligand>
        <name>noradrenaline</name>
        <dbReference type="ChEBI" id="CHEBI:166902"/>
    </ligand>
</feature>
<feature type="binding site" evidence="7 16">
    <location>
        <position position="28"/>
    </location>
    <ligand>
        <name>serotonin</name>
        <dbReference type="ChEBI" id="CHEBI:350546"/>
    </ligand>
</feature>
<feature type="binding site" evidence="7 17">
    <location>
        <position position="43"/>
    </location>
    <ligand>
        <name>noradrenaline</name>
        <dbReference type="ChEBI" id="CHEBI:166902"/>
    </ligand>
</feature>
<feature type="binding site" evidence="7 16">
    <location>
        <position position="56"/>
    </location>
    <ligand>
        <name>serotonin</name>
        <dbReference type="ChEBI" id="CHEBI:350546"/>
    </ligand>
</feature>
<feature type="binding site" evidence="7 15">
    <location>
        <position position="115"/>
    </location>
    <ligand>
        <name>histamine</name>
        <dbReference type="ChEBI" id="CHEBI:58432"/>
    </ligand>
</feature>
<feature type="binding site" evidence="7 16">
    <location>
        <position position="115"/>
    </location>
    <ligand>
        <name>serotonin</name>
        <dbReference type="ChEBI" id="CHEBI:350546"/>
    </ligand>
</feature>
<feature type="binding site" evidence="7 14">
    <location>
        <position position="115"/>
    </location>
    <ligand>
        <name>tryptamine</name>
        <dbReference type="ChEBI" id="CHEBI:57887"/>
    </ligand>
</feature>
<feature type="binding site" evidence="7 15">
    <location>
        <position position="132"/>
    </location>
    <ligand>
        <name>histamine</name>
        <dbReference type="ChEBI" id="CHEBI:58432"/>
    </ligand>
</feature>
<feature type="binding site" evidence="7 17">
    <location>
        <position position="132"/>
    </location>
    <ligand>
        <name>noradrenaline</name>
        <dbReference type="ChEBI" id="CHEBI:166902"/>
    </ligand>
</feature>
<feature type="binding site" evidence="7 16">
    <location>
        <position position="132"/>
    </location>
    <ligand>
        <name>serotonin</name>
        <dbReference type="ChEBI" id="CHEBI:350546"/>
    </ligand>
</feature>
<feature type="binding site" evidence="7 14">
    <location>
        <position position="132"/>
    </location>
    <ligand>
        <name>tryptamine</name>
        <dbReference type="ChEBI" id="CHEBI:57887"/>
    </ligand>
</feature>
<feature type="binding site" evidence="7 15">
    <location>
        <position position="135"/>
    </location>
    <ligand>
        <name>histamine</name>
        <dbReference type="ChEBI" id="CHEBI:58432"/>
    </ligand>
</feature>
<feature type="binding site" evidence="7 17">
    <location>
        <position position="135"/>
    </location>
    <ligand>
        <name>noradrenaline</name>
        <dbReference type="ChEBI" id="CHEBI:166902"/>
    </ligand>
</feature>
<feature type="binding site" evidence="7 16">
    <location>
        <position position="135"/>
    </location>
    <ligand>
        <name>serotonin</name>
        <dbReference type="ChEBI" id="CHEBI:350546"/>
    </ligand>
</feature>
<feature type="binding site" evidence="7 14">
    <location>
        <position position="135"/>
    </location>
    <ligand>
        <name>tryptamine</name>
        <dbReference type="ChEBI" id="CHEBI:57887"/>
    </ligand>
</feature>
<feature type="disulfide bond" evidence="7 14 15 16 17 18">
    <location>
        <begin position="27"/>
        <end position="59"/>
    </location>
</feature>
<feature type="disulfide bond" evidence="7 14 15 16 17 18">
    <location>
        <begin position="40"/>
        <end position="165"/>
    </location>
</feature>
<feature type="disulfide bond" evidence="7 14 15 16 17 18">
    <location>
        <begin position="98"/>
        <end position="117"/>
    </location>
</feature>
<feature type="mutagenesis site" description="Reduces serotonin and tryptamine binding. Reduces serotonin binding and increases tryptamine binding; when associated with L-56." evidence="7">
    <original>E</original>
    <variation>L</variation>
    <location>
        <position position="28"/>
    </location>
</feature>
<feature type="mutagenesis site" description="Increases serotonin and tryptamine binding. Reduces serotonin binding and increases tryptamine binding; when associated with L-28." evidence="7">
    <original>H</original>
    <variation>L</variation>
    <location>
        <position position="56"/>
    </location>
</feature>
<feature type="mutagenesis site" description="Modestly reduces serotonin binding and significantly reduces tryptamine binding." evidence="7">
    <original>Y</original>
    <variation>L</variation>
    <location>
        <position position="115"/>
    </location>
</feature>
<feature type="mutagenesis site" description="Reduces serotonin binding and eliminates tryptamine binding." evidence="7">
    <original>D</original>
    <variation>L</variation>
    <location>
        <position position="132"/>
    </location>
</feature>
<feature type="mutagenesis site" description="Significantly reduces serotonin binding and eliminates tryptamine binding." evidence="7">
    <original>E</original>
    <variation>L</variation>
    <location>
        <position position="135"/>
    </location>
</feature>
<feature type="mutagenesis site" description="Reduces serotonin binding and eliminates tryptamine binding." evidence="7">
    <original>D</original>
    <variation>L</variation>
    <location>
        <position position="160"/>
    </location>
</feature>
<feature type="sequence conflict" description="In Ref. 2; AAK84945/CAC35524." evidence="9" ref="2">
    <original>T</original>
    <variation>I</variation>
    <location>
        <position position="7"/>
    </location>
</feature>
<feature type="sequence conflict" description="In Ref. 2; AAK84945/CAC35524." evidence="9" ref="2">
    <original>G</original>
    <variation>S</variation>
    <location>
        <position position="21"/>
    </location>
</feature>
<feature type="sequence conflict" description="In Ref. 2; AAK84945/CAC35524." evidence="9" ref="2">
    <original>T</original>
    <variation>P</variation>
    <location>
        <position position="33"/>
    </location>
</feature>
<feature type="sequence conflict" description="In Ref. 2; AAK84945/CAC35524." evidence="9" ref="2">
    <original>Q</original>
    <variation>K</variation>
    <location>
        <position position="138"/>
    </location>
</feature>
<feature type="helix" evidence="19">
    <location>
        <begin position="24"/>
        <end position="27"/>
    </location>
</feature>
<feature type="turn" evidence="19">
    <location>
        <begin position="28"/>
        <end position="30"/>
    </location>
</feature>
<feature type="helix" evidence="19">
    <location>
        <begin position="33"/>
        <end position="36"/>
    </location>
</feature>
<feature type="helix" evidence="19">
    <location>
        <begin position="39"/>
        <end position="43"/>
    </location>
</feature>
<feature type="strand" evidence="19">
    <location>
        <begin position="50"/>
        <end position="52"/>
    </location>
</feature>
<feature type="helix" evidence="19">
    <location>
        <begin position="53"/>
        <end position="63"/>
    </location>
</feature>
<feature type="helix" evidence="19">
    <location>
        <begin position="75"/>
        <end position="85"/>
    </location>
</feature>
<feature type="helix" evidence="19">
    <location>
        <begin position="90"/>
        <end position="103"/>
    </location>
</feature>
<feature type="turn" evidence="19">
    <location>
        <begin position="107"/>
        <end position="109"/>
    </location>
</feature>
<feature type="helix" evidence="19">
    <location>
        <begin position="110"/>
        <end position="120"/>
    </location>
</feature>
<feature type="helix" evidence="19">
    <location>
        <begin position="124"/>
        <end position="139"/>
    </location>
</feature>
<feature type="helix" evidence="19">
    <location>
        <begin position="150"/>
        <end position="161"/>
    </location>
</feature>
<feature type="turn" evidence="19">
    <location>
        <begin position="162"/>
        <end position="164"/>
    </location>
</feature>
<keyword id="KW-0002">3D-structure</keyword>
<keyword id="KW-1015">Disulfide bond</keyword>
<keyword id="KW-1185">Reference proteome</keyword>
<keyword id="KW-0964">Secreted</keyword>
<keyword id="KW-0732">Signal</keyword>
<keyword id="KW-0838">Vasoactive</keyword>
<keyword id="KW-0840">Vasodilator</keyword>
<proteinExistence type="evidence at protein level"/>
<name>D7R4_ANOGA</name>
<dbReference type="EMBL" id="AJ302659">
    <property type="protein sequence ID" value="CAC35524.1"/>
    <property type="molecule type" value="mRNA"/>
</dbReference>
<dbReference type="EMBL" id="AY045760">
    <property type="protein sequence ID" value="AAK84945.1"/>
    <property type="molecule type" value="Genomic_DNA"/>
</dbReference>
<dbReference type="EMBL" id="AAAB01008964">
    <property type="protein sequence ID" value="EAA12291.2"/>
    <property type="molecule type" value="Genomic_DNA"/>
</dbReference>
<dbReference type="RefSeq" id="XP_317185.1">
    <property type="nucleotide sequence ID" value="XM_317185.2"/>
</dbReference>
<dbReference type="PDB" id="2PQL">
    <property type="method" value="X-ray"/>
    <property type="resolution" value="2.20 A"/>
    <property type="chains" value="A=22-165"/>
</dbReference>
<dbReference type="PDB" id="2QEB">
    <property type="method" value="X-ray"/>
    <property type="resolution" value="2.00 A"/>
    <property type="chains" value="A/B=22-165"/>
</dbReference>
<dbReference type="PDB" id="2QEH">
    <property type="method" value="X-ray"/>
    <property type="resolution" value="2.10 A"/>
    <property type="chains" value="A=22-165"/>
</dbReference>
<dbReference type="PDB" id="2QEO">
    <property type="method" value="X-ray"/>
    <property type="resolution" value="2.31 A"/>
    <property type="chains" value="A/B=22-165"/>
</dbReference>
<dbReference type="PDB" id="2QEV">
    <property type="method" value="X-ray"/>
    <property type="resolution" value="2.00 A"/>
    <property type="chains" value="A=22-165"/>
</dbReference>
<dbReference type="PDBsum" id="2PQL"/>
<dbReference type="PDBsum" id="2QEB"/>
<dbReference type="PDBsum" id="2QEH"/>
<dbReference type="PDBsum" id="2QEO"/>
<dbReference type="PDBsum" id="2QEV"/>
<dbReference type="SMR" id="Q7PNF2"/>
<dbReference type="PaxDb" id="7165-AGAP008281-PA"/>
<dbReference type="EnsemblMetazoa" id="AGAP008281-RA">
    <property type="protein sequence ID" value="AGAP008281-PA"/>
    <property type="gene ID" value="AGAP008281"/>
</dbReference>
<dbReference type="VEuPathDB" id="VectorBase:AGAMI1_013180"/>
<dbReference type="VEuPathDB" id="VectorBase:AGAP008281"/>
<dbReference type="HOGENOM" id="CLU_1612198_0_0_1"/>
<dbReference type="InParanoid" id="Q7PNF2"/>
<dbReference type="EvolutionaryTrace" id="Q7PNF2"/>
<dbReference type="Proteomes" id="UP000007062">
    <property type="component" value="Chromosome 3R"/>
</dbReference>
<dbReference type="GO" id="GO:0005615">
    <property type="term" value="C:extracellular space"/>
    <property type="evidence" value="ECO:0000314"/>
    <property type="project" value="UniProtKB"/>
</dbReference>
<dbReference type="GO" id="GO:0005549">
    <property type="term" value="F:odorant binding"/>
    <property type="evidence" value="ECO:0007669"/>
    <property type="project" value="InterPro"/>
</dbReference>
<dbReference type="GO" id="GO:0007608">
    <property type="term" value="P:sensory perception of smell"/>
    <property type="evidence" value="ECO:0000318"/>
    <property type="project" value="GO_Central"/>
</dbReference>
<dbReference type="GO" id="GO:0042311">
    <property type="term" value="P:vasodilation"/>
    <property type="evidence" value="ECO:0007669"/>
    <property type="project" value="UniProtKB-KW"/>
</dbReference>
<dbReference type="CDD" id="cd23992">
    <property type="entry name" value="PBP_GOBP"/>
    <property type="match status" value="1"/>
</dbReference>
<dbReference type="FunFam" id="1.10.238.20:FF:000008">
    <property type="entry name" value="D7-related 4 protein"/>
    <property type="match status" value="1"/>
</dbReference>
<dbReference type="Gene3D" id="1.10.238.20">
    <property type="entry name" value="Pheromone/general odorant binding protein domain"/>
    <property type="match status" value="1"/>
</dbReference>
<dbReference type="InterPro" id="IPR006170">
    <property type="entry name" value="PBP/GOBP"/>
</dbReference>
<dbReference type="InterPro" id="IPR036728">
    <property type="entry name" value="PBP_GOBP_sf"/>
</dbReference>
<dbReference type="Pfam" id="PF01395">
    <property type="entry name" value="PBP_GOBP"/>
    <property type="match status" value="1"/>
</dbReference>
<dbReference type="SMART" id="SM00708">
    <property type="entry name" value="PhBP"/>
    <property type="match status" value="1"/>
</dbReference>
<dbReference type="SUPFAM" id="SSF47565">
    <property type="entry name" value="Insect pheromone/odorant-binding proteins"/>
    <property type="match status" value="1"/>
</dbReference>
<comment type="function">
    <text evidence="1 5 7">Modulates blood feeding of female mosquitoes on vertebrate species by binding and sequestering different mediators involved in the host response (By similarity). Binds serotonin, noradrenaline, histamine and tryptamine (PubMed:16301315, PubMed:17928288). Inhibits histamine-, serotonin- and partially noradrenaline-induced smooth muscle contraction (PubMed:16301315). Exhibits vasodilating activity (PubMed:16301315).</text>
</comment>
<comment type="subcellular location">
    <subcellularLocation>
        <location evidence="6">Secreted</location>
    </subcellularLocation>
</comment>
<comment type="tissue specificity">
    <text evidence="3 4 6">Female saliva (at protein level) (PubMed:17913537). Female salivary gland (PubMed:12062411). Not detected in female carcass without salivary glands (PubMed:12062411). Not detected in male tissues (PubMed:11841502, PubMed:12062411).</text>
</comment>
<comment type="developmental stage">
    <text evidence="3 4">Expressed in late pupal stage (PubMed:11841502, PubMed:12062411). Not detected in embryo, larval and early pupal stages (PubMed:11841502, PubMed:12062411).</text>
</comment>
<comment type="similarity">
    <text evidence="9">Belongs to the PBP/GOBP family.</text>
</comment>
<reference evidence="11" key="1">
    <citation type="journal article" date="2002" name="FEBS Lett.">
        <title>Novel cDNAs encoding salivary proteins from the malaria vector Anopheles gambiae.</title>
        <authorList>
            <person name="Lanfrancotti A."/>
            <person name="Lombardo F."/>
            <person name="Santolamazza F."/>
            <person name="Veneri M."/>
            <person name="Castrignano T."/>
            <person name="Coluzzi M."/>
            <person name="Arca' B."/>
        </authorList>
    </citation>
    <scope>NUCLEOTIDE SEQUENCE [MRNA]</scope>
    <scope>TISSUE SPECIFICITY</scope>
    <scope>DEVELOPMENTAL STAGE</scope>
    <source>
        <strain evidence="11">Gasua</strain>
        <tissue evidence="11">Salivary gland</tissue>
    </source>
</reference>
<reference evidence="10 11" key="2">
    <citation type="journal article" date="2002" name="Insect Mol. Biol.">
        <title>A cluster of four D7-related genes is expressed in the salivary glands of the African malaria vector Anopheles gambiae.</title>
        <authorList>
            <person name="Arca' B."/>
            <person name="Lombardo F."/>
            <person name="Lanfrancotti A."/>
            <person name="Spanos L."/>
            <person name="Veneri M."/>
            <person name="Louis C."/>
            <person name="Coluzzi M."/>
        </authorList>
    </citation>
    <scope>NUCLEOTIDE SEQUENCE [GENOMIC DNA / MRNA]</scope>
    <scope>TISSUE SPECIFICITY</scope>
    <scope>DEVELOPMENTAL STAGE</scope>
    <source>
        <strain evidence="11">Gasua</strain>
        <tissue evidence="11">Salivary gland</tissue>
    </source>
</reference>
<reference evidence="13" key="3">
    <citation type="journal article" date="2002" name="Science">
        <title>The genome sequence of the malaria mosquito Anopheles gambiae.</title>
        <authorList>
            <person name="Holt R.A."/>
            <person name="Subramanian G.M."/>
            <person name="Halpern A."/>
            <person name="Sutton G.G."/>
            <person name="Charlab R."/>
            <person name="Nusskern D.R."/>
            <person name="Wincker P."/>
            <person name="Clark A.G."/>
            <person name="Ribeiro J.M.C."/>
            <person name="Wides R."/>
            <person name="Salzberg S.L."/>
            <person name="Loftus B.J."/>
            <person name="Yandell M.D."/>
            <person name="Majoros W.H."/>
            <person name="Rusch D.B."/>
            <person name="Lai Z."/>
            <person name="Kraft C.L."/>
            <person name="Abril J.F."/>
            <person name="Anthouard V."/>
            <person name="Arensburger P."/>
            <person name="Atkinson P.W."/>
            <person name="Baden H."/>
            <person name="de Berardinis V."/>
            <person name="Baldwin D."/>
            <person name="Benes V."/>
            <person name="Biedler J."/>
            <person name="Blass C."/>
            <person name="Bolanos R."/>
            <person name="Boscus D."/>
            <person name="Barnstead M."/>
            <person name="Cai S."/>
            <person name="Center A."/>
            <person name="Chaturverdi K."/>
            <person name="Christophides G.K."/>
            <person name="Chrystal M.A.M."/>
            <person name="Clamp M."/>
            <person name="Cravchik A."/>
            <person name="Curwen V."/>
            <person name="Dana A."/>
            <person name="Delcher A."/>
            <person name="Dew I."/>
            <person name="Evans C.A."/>
            <person name="Flanigan M."/>
            <person name="Grundschober-Freimoser A."/>
            <person name="Friedli L."/>
            <person name="Gu Z."/>
            <person name="Guan P."/>
            <person name="Guigo R."/>
            <person name="Hillenmeyer M.E."/>
            <person name="Hladun S.L."/>
            <person name="Hogan J.R."/>
            <person name="Hong Y.S."/>
            <person name="Hoover J."/>
            <person name="Jaillon O."/>
            <person name="Ke Z."/>
            <person name="Kodira C.D."/>
            <person name="Kokoza E."/>
            <person name="Koutsos A."/>
            <person name="Letunic I."/>
            <person name="Levitsky A.A."/>
            <person name="Liang Y."/>
            <person name="Lin J.-J."/>
            <person name="Lobo N.F."/>
            <person name="Lopez J.R."/>
            <person name="Malek J.A."/>
            <person name="McIntosh T.C."/>
            <person name="Meister S."/>
            <person name="Miller J.R."/>
            <person name="Mobarry C."/>
            <person name="Mongin E."/>
            <person name="Murphy S.D."/>
            <person name="O'Brochta D.A."/>
            <person name="Pfannkoch C."/>
            <person name="Qi R."/>
            <person name="Regier M.A."/>
            <person name="Remington K."/>
            <person name="Shao H."/>
            <person name="Sharakhova M.V."/>
            <person name="Sitter C.D."/>
            <person name="Shetty J."/>
            <person name="Smith T.J."/>
            <person name="Strong R."/>
            <person name="Sun J."/>
            <person name="Thomasova D."/>
            <person name="Ton L.Q."/>
            <person name="Topalis P."/>
            <person name="Tu Z.J."/>
            <person name="Unger M.F."/>
            <person name="Walenz B."/>
            <person name="Wang A.H."/>
            <person name="Wang J."/>
            <person name="Wang M."/>
            <person name="Wang X."/>
            <person name="Woodford K.J."/>
            <person name="Wortman J.R."/>
            <person name="Wu M."/>
            <person name="Yao A."/>
            <person name="Zdobnov E.M."/>
            <person name="Zhang H."/>
            <person name="Zhao Q."/>
            <person name="Zhao S."/>
            <person name="Zhu S.C."/>
            <person name="Zhimulev I."/>
            <person name="Coluzzi M."/>
            <person name="della Torre A."/>
            <person name="Roth C.W."/>
            <person name="Louis C."/>
            <person name="Kalush F."/>
            <person name="Mural R.J."/>
            <person name="Myers E.W."/>
            <person name="Adams M.D."/>
            <person name="Smith H.O."/>
            <person name="Broder S."/>
            <person name="Gardner M.J."/>
            <person name="Fraser C.M."/>
            <person name="Birney E."/>
            <person name="Bork P."/>
            <person name="Brey P.T."/>
            <person name="Venter J.C."/>
            <person name="Weissenbach J."/>
            <person name="Kafatos F.C."/>
            <person name="Collins F.H."/>
            <person name="Hoffman S.L."/>
        </authorList>
    </citation>
    <scope>NUCLEOTIDE SEQUENCE [LARGE SCALE GENOMIC DNA]</scope>
    <source>
        <strain evidence="13">PEST</strain>
    </source>
</reference>
<reference evidence="9" key="4">
    <citation type="journal article" date="2006" name="J. Biol. Chem.">
        <title>Function and evolution of a mosquito salivary protein family.</title>
        <authorList>
            <person name="Calvo E."/>
            <person name="Mans B.J."/>
            <person name="Andersen J.F."/>
            <person name="Ribeiro J.M."/>
        </authorList>
    </citation>
    <scope>FUNCTION</scope>
</reference>
<reference key="5">
    <citation type="journal article" date="2007" name="Microbes Infect.">
        <title>Antibody response against saliva antigens of Anopheles gambiae and Aedes aegypti in travellers in tropical Africa.</title>
        <authorList>
            <person name="Orlandi-Pradines E."/>
            <person name="Almeras L."/>
            <person name="Denis de Senneville L."/>
            <person name="Barbe S."/>
            <person name="Remoue F."/>
            <person name="Villard C."/>
            <person name="Cornelie S."/>
            <person name="Penhoat K."/>
            <person name="Pascual A."/>
            <person name="Bourgouin C."/>
            <person name="Fontenille D."/>
            <person name="Bonnet J."/>
            <person name="Corre-Catelin N."/>
            <person name="Reiter P."/>
            <person name="Pages F."/>
            <person name="Laffite D."/>
            <person name="Boulanger D."/>
            <person name="Simondon F."/>
            <person name="Pradines B."/>
            <person name="Fusai T."/>
            <person name="Rogier C."/>
        </authorList>
    </citation>
    <scope>IDENTIFICATION BY MASS SPECTROMETRY</scope>
    <scope>SUBCELLULAR LOCATION</scope>
    <scope>TISSUE SPECIFICITY</scope>
</reference>
<reference evidence="14 15 16 17 18" key="6">
    <citation type="journal article" date="2007" name="J. Biol. Chem.">
        <title>The crystal structure of D7r4, a salivary biogenic amine-binding protein from the malaria mosquito Anopheles gambiae.</title>
        <authorList>
            <person name="Mans B.J."/>
            <person name="Calvo E."/>
            <person name="Ribeiro J.M."/>
            <person name="Andersen J.F."/>
        </authorList>
    </citation>
    <scope>X-RAY CRYSTALLOGRAPHY (2.00 ANGSTROMS) OF 22-165 WITH TRYPTAMINE; SEROTONIN; NOREPINEPHRINE AND HISTAMINE</scope>
    <scope>FUNCTION</scope>
    <scope>DISULFIDE BONDS</scope>
    <scope>MUTAGENESIS OF GLU-28; HIS-56; TYR-115; ASP-132; GLU-135 AND ASP-160</scope>
</reference>
<gene>
    <name evidence="8" type="primary">D7r4</name>
    <name evidence="12" type="ORF">AgaP_AGAP008281</name>
</gene>
<evidence type="ECO:0000250" key="1">
    <source>
        <dbReference type="UniProtKB" id="P18153"/>
    </source>
</evidence>
<evidence type="ECO:0000255" key="2"/>
<evidence type="ECO:0000269" key="3">
    <source>
    </source>
</evidence>
<evidence type="ECO:0000269" key="4">
    <source>
    </source>
</evidence>
<evidence type="ECO:0000269" key="5">
    <source>
    </source>
</evidence>
<evidence type="ECO:0000269" key="6">
    <source>
    </source>
</evidence>
<evidence type="ECO:0000269" key="7">
    <source>
    </source>
</evidence>
<evidence type="ECO:0000303" key="8">
    <source>
    </source>
</evidence>
<evidence type="ECO:0000305" key="9"/>
<evidence type="ECO:0000312" key="10">
    <source>
        <dbReference type="EMBL" id="AAK84945.1"/>
    </source>
</evidence>
<evidence type="ECO:0000312" key="11">
    <source>
        <dbReference type="EMBL" id="CAC35524.1"/>
    </source>
</evidence>
<evidence type="ECO:0000312" key="12">
    <source>
        <dbReference type="EMBL" id="EAA12291.2"/>
    </source>
</evidence>
<evidence type="ECO:0000312" key="13">
    <source>
        <dbReference type="Proteomes" id="UP000007062"/>
    </source>
</evidence>
<evidence type="ECO:0007744" key="14">
    <source>
        <dbReference type="PDB" id="2PQL"/>
    </source>
</evidence>
<evidence type="ECO:0007744" key="15">
    <source>
        <dbReference type="PDB" id="2QEB"/>
    </source>
</evidence>
<evidence type="ECO:0007744" key="16">
    <source>
        <dbReference type="PDB" id="2QEH"/>
    </source>
</evidence>
<evidence type="ECO:0007744" key="17">
    <source>
        <dbReference type="PDB" id="2QEO"/>
    </source>
</evidence>
<evidence type="ECO:0007744" key="18">
    <source>
        <dbReference type="PDB" id="2QEV"/>
    </source>
</evidence>
<evidence type="ECO:0007829" key="19">
    <source>
        <dbReference type="PDB" id="2QEV"/>
    </source>
</evidence>
<organism evidence="12">
    <name type="scientific">Anopheles gambiae</name>
    <name type="common">African malaria mosquito</name>
    <dbReference type="NCBI Taxonomy" id="7165"/>
    <lineage>
        <taxon>Eukaryota</taxon>
        <taxon>Metazoa</taxon>
        <taxon>Ecdysozoa</taxon>
        <taxon>Arthropoda</taxon>
        <taxon>Hexapoda</taxon>
        <taxon>Insecta</taxon>
        <taxon>Pterygota</taxon>
        <taxon>Neoptera</taxon>
        <taxon>Endopterygota</taxon>
        <taxon>Diptera</taxon>
        <taxon>Nematocera</taxon>
        <taxon>Culicoidea</taxon>
        <taxon>Culicidae</taxon>
        <taxon>Anophelinae</taxon>
        <taxon>Anopheles</taxon>
    </lineage>
</organism>
<accession>Q7PNF2</accession>
<accession>Q9BIH3</accession>
<sequence>MIRQVITSYFLTVCLLALVQGETVQDCENKLPTSLKSRLCEIRRYEIIEGPEMDKHIHCVMRALDFVYEDGRGDYHKLYDPLNIIELDKRHDVNLEKCIGECVQVPTSERAHVFYKCLLKSTTGRTFKKVFDLMELKQAGKVPQHQRYTAEFVQIMKDYDKALNC</sequence>